<evidence type="ECO:0000250" key="1">
    <source>
        <dbReference type="UniProtKB" id="Q8BJT9"/>
    </source>
</evidence>
<evidence type="ECO:0000255" key="2"/>
<evidence type="ECO:0000256" key="3">
    <source>
        <dbReference type="SAM" id="MobiDB-lite"/>
    </source>
</evidence>
<evidence type="ECO:0000269" key="4">
    <source>
    </source>
</evidence>
<evidence type="ECO:0000269" key="5">
    <source>
    </source>
</evidence>
<evidence type="ECO:0000269" key="6">
    <source>
    </source>
</evidence>
<evidence type="ECO:0000303" key="7">
    <source>
    </source>
</evidence>
<evidence type="ECO:0000303" key="8">
    <source>
    </source>
</evidence>
<evidence type="ECO:0000305" key="9"/>
<sequence>MPFRLLIPLGLLCALLPQHHGAPGPDGSAPDPAHYRERVKAMFYHAYDSYLENAFPFDELRPLTCDGHDTWGSFSLTLIDALDTLLILGNVSEFQRVVEVLQDSVDFDIDVNASVFETNIRVVGGLLSAHLLSKKAGVEVEAGWPCSGPLLRMAEEAARKLLPAFQTPTGMPYGTVNLLHGVNPGETPVTCTAGIGTFIVEFATLSSLTGDPVFEDVARVALMRLWESRSDIGLVGNHIDVLTGKWVAQDAGIGAGVDSYFEYLVKGAILLQDKKLMAMFLEYNKAIRNYTRFDDWYLWVQMYKGTVSMPVFQSLEAYWPGLQSLIGDIDNAMRTFLNYYTVWKQFGGLPEFYNIPQGYTVEKREGYPLRPELIESAMYLYRATGDPTLLELGRDAVESIEKISKVECGFATIKDLRDHKLDNRMESFFLAETVKYLYLLFDPTNFIHNNGSTFDAVITPYGECILGAGGYIFNTEAHPIDPAALHCCQRLKEEQWEVEDLMREFYSLKRSRSKFQKNTVSSGPWEPPARPGTLFSPENHDQARERKPAKQKVPLLSCPSQPFTSKLALLGQVFLDSS</sequence>
<gene>
    <name type="primary">EDEM2</name>
    <name type="synonym">C20orf31</name>
    <name type="synonym">C20orf49</name>
    <name type="ORF">UNQ573/PRO1135</name>
</gene>
<name>EDEM2_HUMAN</name>
<dbReference type="EMBL" id="AK001645">
    <property type="protein sequence ID" value="BAA91806.1"/>
    <property type="molecule type" value="mRNA"/>
</dbReference>
<dbReference type="EMBL" id="AK023931">
    <property type="protein sequence ID" value="BAB14731.1"/>
    <property type="molecule type" value="mRNA"/>
</dbReference>
<dbReference type="EMBL" id="AK300212">
    <property type="protein sequence ID" value="BAG61981.1"/>
    <property type="molecule type" value="mRNA"/>
</dbReference>
<dbReference type="EMBL" id="AY358580">
    <property type="protein sequence ID" value="AAQ88943.1"/>
    <property type="molecule type" value="mRNA"/>
</dbReference>
<dbReference type="EMBL" id="CR457266">
    <property type="protein sequence ID" value="CAG33547.1"/>
    <property type="molecule type" value="mRNA"/>
</dbReference>
<dbReference type="EMBL" id="AL135844">
    <property type="status" value="NOT_ANNOTATED_CDS"/>
    <property type="molecule type" value="Genomic_DNA"/>
</dbReference>
<dbReference type="EMBL" id="AL356652">
    <property type="status" value="NOT_ANNOTATED_CDS"/>
    <property type="molecule type" value="Genomic_DNA"/>
</dbReference>
<dbReference type="EMBL" id="CH471077">
    <property type="protein sequence ID" value="EAW76228.1"/>
    <property type="molecule type" value="Genomic_DNA"/>
</dbReference>
<dbReference type="EMBL" id="BC001371">
    <property type="protein sequence ID" value="AAH01371.1"/>
    <property type="molecule type" value="mRNA"/>
</dbReference>
<dbReference type="EMBL" id="BC016184">
    <property type="protein sequence ID" value="AAH16184.1"/>
    <property type="molecule type" value="mRNA"/>
</dbReference>
<dbReference type="CCDS" id="CCDS13247.1">
    <molecule id="Q9BV94-1"/>
</dbReference>
<dbReference type="CCDS" id="CCDS46592.1">
    <molecule id="Q9BV94-2"/>
</dbReference>
<dbReference type="RefSeq" id="NP_001138497.1">
    <molecule id="Q9BV94-2"/>
    <property type="nucleotide sequence ID" value="NM_001145025.2"/>
</dbReference>
<dbReference type="RefSeq" id="NP_060687.2">
    <molecule id="Q9BV94-1"/>
    <property type="nucleotide sequence ID" value="NM_018217.3"/>
</dbReference>
<dbReference type="SMR" id="Q9BV94"/>
<dbReference type="BioGRID" id="120859">
    <property type="interactions" value="174"/>
</dbReference>
<dbReference type="FunCoup" id="Q9BV94">
    <property type="interactions" value="1577"/>
</dbReference>
<dbReference type="IntAct" id="Q9BV94">
    <property type="interactions" value="90"/>
</dbReference>
<dbReference type="STRING" id="9606.ENSP00000363616"/>
<dbReference type="CAZy" id="GH47">
    <property type="family name" value="Glycoside Hydrolase Family 47"/>
</dbReference>
<dbReference type="GlyCosmos" id="Q9BV94">
    <property type="glycosylation" value="4 sites, No reported glycans"/>
</dbReference>
<dbReference type="GlyGen" id="Q9BV94">
    <property type="glycosylation" value="4 sites"/>
</dbReference>
<dbReference type="iPTMnet" id="Q9BV94"/>
<dbReference type="PhosphoSitePlus" id="Q9BV94"/>
<dbReference type="BioMuta" id="EDEM2"/>
<dbReference type="DMDM" id="17368685"/>
<dbReference type="jPOST" id="Q9BV94"/>
<dbReference type="MassIVE" id="Q9BV94"/>
<dbReference type="PaxDb" id="9606-ENSP00000363616"/>
<dbReference type="PeptideAtlas" id="Q9BV94"/>
<dbReference type="ProteomicsDB" id="79184">
    <molecule id="Q9BV94-1"/>
</dbReference>
<dbReference type="ProteomicsDB" id="79185">
    <molecule id="Q9BV94-2"/>
</dbReference>
<dbReference type="Pumba" id="Q9BV94"/>
<dbReference type="Antibodypedia" id="25993">
    <property type="antibodies" value="143 antibodies from 29 providers"/>
</dbReference>
<dbReference type="DNASU" id="55741"/>
<dbReference type="Ensembl" id="ENST00000374491.3">
    <molecule id="Q9BV94-2"/>
    <property type="protein sequence ID" value="ENSP00000363615.2"/>
    <property type="gene ID" value="ENSG00000088298.13"/>
</dbReference>
<dbReference type="Ensembl" id="ENST00000374492.8">
    <molecule id="Q9BV94-1"/>
    <property type="protein sequence ID" value="ENSP00000363616.3"/>
    <property type="gene ID" value="ENSG00000088298.13"/>
</dbReference>
<dbReference type="GeneID" id="55741"/>
<dbReference type="KEGG" id="hsa:55741"/>
<dbReference type="MANE-Select" id="ENST00000374492.8">
    <property type="protein sequence ID" value="ENSP00000363616.3"/>
    <property type="RefSeq nucleotide sequence ID" value="NM_018217.3"/>
    <property type="RefSeq protein sequence ID" value="NP_060687.2"/>
</dbReference>
<dbReference type="UCSC" id="uc002xbo.3">
    <molecule id="Q9BV94-1"/>
    <property type="organism name" value="human"/>
</dbReference>
<dbReference type="AGR" id="HGNC:15877"/>
<dbReference type="CTD" id="55741"/>
<dbReference type="DisGeNET" id="55741"/>
<dbReference type="GeneCards" id="EDEM2"/>
<dbReference type="HGNC" id="HGNC:15877">
    <property type="gene designation" value="EDEM2"/>
</dbReference>
<dbReference type="HPA" id="ENSG00000088298">
    <property type="expression patterns" value="Low tissue specificity"/>
</dbReference>
<dbReference type="MIM" id="610302">
    <property type="type" value="gene"/>
</dbReference>
<dbReference type="neXtProt" id="NX_Q9BV94"/>
<dbReference type="OpenTargets" id="ENSG00000088298"/>
<dbReference type="PharmGKB" id="PA25747"/>
<dbReference type="VEuPathDB" id="HostDB:ENSG00000088298"/>
<dbReference type="eggNOG" id="KOG2429">
    <property type="taxonomic scope" value="Eukaryota"/>
</dbReference>
<dbReference type="GeneTree" id="ENSGT00940000159233"/>
<dbReference type="HOGENOM" id="CLU_003818_5_4_1"/>
<dbReference type="InParanoid" id="Q9BV94"/>
<dbReference type="OMA" id="HNYHRVW"/>
<dbReference type="OrthoDB" id="8118055at2759"/>
<dbReference type="PAN-GO" id="Q9BV94">
    <property type="GO annotations" value="3 GO annotations based on evolutionary models"/>
</dbReference>
<dbReference type="PhylomeDB" id="Q9BV94"/>
<dbReference type="TreeFam" id="TF300807"/>
<dbReference type="PathwayCommons" id="Q9BV94"/>
<dbReference type="Reactome" id="R-HSA-901032">
    <property type="pathway name" value="ER Quality Control Compartment (ERQC)"/>
</dbReference>
<dbReference type="Reactome" id="R-HSA-9694548">
    <property type="pathway name" value="Maturation of spike protein"/>
</dbReference>
<dbReference type="SignaLink" id="Q9BV94"/>
<dbReference type="BioGRID-ORCS" id="55741">
    <property type="hits" value="18 hits in 1158 CRISPR screens"/>
</dbReference>
<dbReference type="ChiTaRS" id="EDEM2">
    <property type="organism name" value="human"/>
</dbReference>
<dbReference type="GeneWiki" id="EDEM2"/>
<dbReference type="GenomeRNAi" id="55741"/>
<dbReference type="Pharos" id="Q9BV94">
    <property type="development level" value="Tbio"/>
</dbReference>
<dbReference type="PRO" id="PR:Q9BV94"/>
<dbReference type="Proteomes" id="UP000005640">
    <property type="component" value="Chromosome 20"/>
</dbReference>
<dbReference type="RNAct" id="Q9BV94">
    <property type="molecule type" value="protein"/>
</dbReference>
<dbReference type="Bgee" id="ENSG00000088298">
    <property type="expression patterns" value="Expressed in granulocyte and 164 other cell types or tissues"/>
</dbReference>
<dbReference type="GO" id="GO:0005783">
    <property type="term" value="C:endoplasmic reticulum"/>
    <property type="evidence" value="ECO:0000314"/>
    <property type="project" value="ParkinsonsUK-UCL"/>
</dbReference>
<dbReference type="GO" id="GO:0005788">
    <property type="term" value="C:endoplasmic reticulum lumen"/>
    <property type="evidence" value="ECO:0007669"/>
    <property type="project" value="UniProtKB-SubCell"/>
</dbReference>
<dbReference type="GO" id="GO:0044322">
    <property type="term" value="C:endoplasmic reticulum quality control compartment"/>
    <property type="evidence" value="ECO:0000304"/>
    <property type="project" value="Reactome"/>
</dbReference>
<dbReference type="GO" id="GO:0016020">
    <property type="term" value="C:membrane"/>
    <property type="evidence" value="ECO:0007669"/>
    <property type="project" value="InterPro"/>
</dbReference>
<dbReference type="GO" id="GO:0005509">
    <property type="term" value="F:calcium ion binding"/>
    <property type="evidence" value="ECO:0007669"/>
    <property type="project" value="InterPro"/>
</dbReference>
<dbReference type="GO" id="GO:0004571">
    <property type="term" value="F:mannosyl-oligosaccharide 1,2-alpha-mannosidase activity"/>
    <property type="evidence" value="ECO:0000315"/>
    <property type="project" value="ParkinsonsUK-UCL"/>
</dbReference>
<dbReference type="GO" id="GO:0005975">
    <property type="term" value="P:carbohydrate metabolic process"/>
    <property type="evidence" value="ECO:0007669"/>
    <property type="project" value="InterPro"/>
</dbReference>
<dbReference type="GO" id="GO:1904380">
    <property type="term" value="P:endoplasmic reticulum mannose trimming"/>
    <property type="evidence" value="ECO:0000304"/>
    <property type="project" value="Reactome"/>
</dbReference>
<dbReference type="GO" id="GO:0030968">
    <property type="term" value="P:endoplasmic reticulum unfolded protein response"/>
    <property type="evidence" value="ECO:0000318"/>
    <property type="project" value="GO_Central"/>
</dbReference>
<dbReference type="GO" id="GO:0036503">
    <property type="term" value="P:ERAD pathway"/>
    <property type="evidence" value="ECO:0000315"/>
    <property type="project" value="ParkinsonsUK-UCL"/>
</dbReference>
<dbReference type="GO" id="GO:0006058">
    <property type="term" value="P:mannoprotein catabolic process"/>
    <property type="evidence" value="ECO:0000315"/>
    <property type="project" value="ParkinsonsUK-UCL"/>
</dbReference>
<dbReference type="GO" id="GO:1904154">
    <property type="term" value="P:positive regulation of retrograde protein transport, ER to cytosol"/>
    <property type="evidence" value="ECO:0000315"/>
    <property type="project" value="ParkinsonsUK-UCL"/>
</dbReference>
<dbReference type="GO" id="GO:0097466">
    <property type="term" value="P:ubiquitin-dependent glycoprotein ERAD pathway"/>
    <property type="evidence" value="ECO:0000318"/>
    <property type="project" value="GO_Central"/>
</dbReference>
<dbReference type="GO" id="GO:0019082">
    <property type="term" value="P:viral protein processing"/>
    <property type="evidence" value="ECO:0000304"/>
    <property type="project" value="Reactome"/>
</dbReference>
<dbReference type="FunFam" id="1.50.10.10:FF:000015">
    <property type="entry name" value="alpha-1,2-Mannosidase"/>
    <property type="match status" value="1"/>
</dbReference>
<dbReference type="Gene3D" id="1.50.10.10">
    <property type="match status" value="1"/>
</dbReference>
<dbReference type="InterPro" id="IPR012341">
    <property type="entry name" value="6hp_glycosidase-like_sf"/>
</dbReference>
<dbReference type="InterPro" id="IPR044674">
    <property type="entry name" value="EDEM1/2/3"/>
</dbReference>
<dbReference type="InterPro" id="IPR001382">
    <property type="entry name" value="Glyco_hydro_47"/>
</dbReference>
<dbReference type="InterPro" id="IPR036026">
    <property type="entry name" value="Seven-hairpin_glycosidases"/>
</dbReference>
<dbReference type="PANTHER" id="PTHR45679">
    <property type="entry name" value="ER DEGRADATION-ENHANCING ALPHA-MANNOSIDASE-LIKE PROTEIN 2"/>
    <property type="match status" value="1"/>
</dbReference>
<dbReference type="PANTHER" id="PTHR45679:SF6">
    <property type="entry name" value="ER DEGRADATION-ENHANCING ALPHA-MANNOSIDASE-LIKE PROTEIN 2"/>
    <property type="match status" value="1"/>
</dbReference>
<dbReference type="Pfam" id="PF01532">
    <property type="entry name" value="Glyco_hydro_47"/>
    <property type="match status" value="1"/>
</dbReference>
<dbReference type="PRINTS" id="PR00747">
    <property type="entry name" value="GLYHDRLASE47"/>
</dbReference>
<dbReference type="SUPFAM" id="SSF48225">
    <property type="entry name" value="Seven-hairpin glycosidases"/>
    <property type="match status" value="1"/>
</dbReference>
<comment type="function">
    <text evidence="1 5 6">Involved in the endoplasmic reticulum-associated degradation (ERAD) pathway that targets misfolded glycoproteins for degradation in an N-glycan-dependent manner (PubMed:15537790, PubMed:25092655). May initiate ERAD by promoting the first mannose trimming step of ERAD substrates, from Man9GlcNAc2 to Man8GlcNAc2 (PubMed:25092655). Seems to recognize and bind to exposed hydrophobic regions in target proteins (By similarity).</text>
</comment>
<comment type="subcellular location">
    <subcellularLocation>
        <location evidence="5">Endoplasmic reticulum lumen</location>
    </subcellularLocation>
</comment>
<comment type="alternative products">
    <event type="alternative splicing"/>
    <isoform>
        <id>Q9BV94-1</id>
        <name>1</name>
        <sequence type="displayed"/>
    </isoform>
    <isoform>
        <id>Q9BV94-2</id>
        <name>2</name>
        <sequence type="described" ref="VSP_013183"/>
    </isoform>
</comment>
<comment type="tissue specificity">
    <text evidence="5">Expressed ubiquitously in all tissues tested with slightly higher levels detected in small intestine and peripheral blood leukocytes and weakest levels in brain and skeletal muscle.</text>
</comment>
<comment type="PTM">
    <text evidence="5">N-glycosylated.</text>
</comment>
<comment type="similarity">
    <text evidence="9">Belongs to the glycosyl hydrolase 47 family.</text>
</comment>
<comment type="caution">
    <text evidence="5 6">Has similarity to alpha 1,2-mannosidases, but the catalytic activity of this protein is controversial (PubMed:15537790, PubMed:25092655). One study shows that it is important for a specific oligosaccharide trimming step from Man9GlcNAc2 to Man8GlcNAc2, suggesting activity as a mannosidase (PubMed:25092655). However, another study reports that this protein has no mannosidase activity (PubMed:15537790).</text>
</comment>
<accession>Q9BV94</accession>
<accession>B4DTG9</accession>
<accession>Q6GU33</accession>
<accession>Q6IA89</accession>
<accession>Q6UWZ4</accession>
<accession>Q9H4U0</accession>
<accession>Q9H886</accession>
<accession>Q9NTL9</accession>
<accession>Q9NVE6</accession>
<reference key="1">
    <citation type="journal article" date="2004" name="Nat. Genet.">
        <title>Complete sequencing and characterization of 21,243 full-length human cDNAs.</title>
        <authorList>
            <person name="Ota T."/>
            <person name="Suzuki Y."/>
            <person name="Nishikawa T."/>
            <person name="Otsuki T."/>
            <person name="Sugiyama T."/>
            <person name="Irie R."/>
            <person name="Wakamatsu A."/>
            <person name="Hayashi K."/>
            <person name="Sato H."/>
            <person name="Nagai K."/>
            <person name="Kimura K."/>
            <person name="Makita H."/>
            <person name="Sekine M."/>
            <person name="Obayashi M."/>
            <person name="Nishi T."/>
            <person name="Shibahara T."/>
            <person name="Tanaka T."/>
            <person name="Ishii S."/>
            <person name="Yamamoto J."/>
            <person name="Saito K."/>
            <person name="Kawai Y."/>
            <person name="Isono Y."/>
            <person name="Nakamura Y."/>
            <person name="Nagahari K."/>
            <person name="Murakami K."/>
            <person name="Yasuda T."/>
            <person name="Iwayanagi T."/>
            <person name="Wagatsuma M."/>
            <person name="Shiratori A."/>
            <person name="Sudo H."/>
            <person name="Hosoiri T."/>
            <person name="Kaku Y."/>
            <person name="Kodaira H."/>
            <person name="Kondo H."/>
            <person name="Sugawara M."/>
            <person name="Takahashi M."/>
            <person name="Kanda K."/>
            <person name="Yokoi T."/>
            <person name="Furuya T."/>
            <person name="Kikkawa E."/>
            <person name="Omura Y."/>
            <person name="Abe K."/>
            <person name="Kamihara K."/>
            <person name="Katsuta N."/>
            <person name="Sato K."/>
            <person name="Tanikawa M."/>
            <person name="Yamazaki M."/>
            <person name="Ninomiya K."/>
            <person name="Ishibashi T."/>
            <person name="Yamashita H."/>
            <person name="Murakawa K."/>
            <person name="Fujimori K."/>
            <person name="Tanai H."/>
            <person name="Kimata M."/>
            <person name="Watanabe M."/>
            <person name="Hiraoka S."/>
            <person name="Chiba Y."/>
            <person name="Ishida S."/>
            <person name="Ono Y."/>
            <person name="Takiguchi S."/>
            <person name="Watanabe S."/>
            <person name="Yosida M."/>
            <person name="Hotuta T."/>
            <person name="Kusano J."/>
            <person name="Kanehori K."/>
            <person name="Takahashi-Fujii A."/>
            <person name="Hara H."/>
            <person name="Tanase T.-O."/>
            <person name="Nomura Y."/>
            <person name="Togiya S."/>
            <person name="Komai F."/>
            <person name="Hara R."/>
            <person name="Takeuchi K."/>
            <person name="Arita M."/>
            <person name="Imose N."/>
            <person name="Musashino K."/>
            <person name="Yuuki H."/>
            <person name="Oshima A."/>
            <person name="Sasaki N."/>
            <person name="Aotsuka S."/>
            <person name="Yoshikawa Y."/>
            <person name="Matsunawa H."/>
            <person name="Ichihara T."/>
            <person name="Shiohata N."/>
            <person name="Sano S."/>
            <person name="Moriya S."/>
            <person name="Momiyama H."/>
            <person name="Satoh N."/>
            <person name="Takami S."/>
            <person name="Terashima Y."/>
            <person name="Suzuki O."/>
            <person name="Nakagawa S."/>
            <person name="Senoh A."/>
            <person name="Mizoguchi H."/>
            <person name="Goto Y."/>
            <person name="Shimizu F."/>
            <person name="Wakebe H."/>
            <person name="Hishigaki H."/>
            <person name="Watanabe T."/>
            <person name="Sugiyama A."/>
            <person name="Takemoto M."/>
            <person name="Kawakami B."/>
            <person name="Yamazaki M."/>
            <person name="Watanabe K."/>
            <person name="Kumagai A."/>
            <person name="Itakura S."/>
            <person name="Fukuzumi Y."/>
            <person name="Fujimori Y."/>
            <person name="Komiyama M."/>
            <person name="Tashiro H."/>
            <person name="Tanigami A."/>
            <person name="Fujiwara T."/>
            <person name="Ono T."/>
            <person name="Yamada K."/>
            <person name="Fujii Y."/>
            <person name="Ozaki K."/>
            <person name="Hirao M."/>
            <person name="Ohmori Y."/>
            <person name="Kawabata A."/>
            <person name="Hikiji T."/>
            <person name="Kobatake N."/>
            <person name="Inagaki H."/>
            <person name="Ikema Y."/>
            <person name="Okamoto S."/>
            <person name="Okitani R."/>
            <person name="Kawakami T."/>
            <person name="Noguchi S."/>
            <person name="Itoh T."/>
            <person name="Shigeta K."/>
            <person name="Senba T."/>
            <person name="Matsumura K."/>
            <person name="Nakajima Y."/>
            <person name="Mizuno T."/>
            <person name="Morinaga M."/>
            <person name="Sasaki M."/>
            <person name="Togashi T."/>
            <person name="Oyama M."/>
            <person name="Hata H."/>
            <person name="Watanabe M."/>
            <person name="Komatsu T."/>
            <person name="Mizushima-Sugano J."/>
            <person name="Satoh T."/>
            <person name="Shirai Y."/>
            <person name="Takahashi Y."/>
            <person name="Nakagawa K."/>
            <person name="Okumura K."/>
            <person name="Nagase T."/>
            <person name="Nomura N."/>
            <person name="Kikuchi H."/>
            <person name="Masuho Y."/>
            <person name="Yamashita R."/>
            <person name="Nakai K."/>
            <person name="Yada T."/>
            <person name="Nakamura Y."/>
            <person name="Ohara O."/>
            <person name="Isogai T."/>
            <person name="Sugano S."/>
        </authorList>
    </citation>
    <scope>NUCLEOTIDE SEQUENCE [LARGE SCALE MRNA] (ISOFORMS 1 AND 2)</scope>
    <source>
        <tissue>Placenta</tissue>
        <tissue>Thyroid</tissue>
    </source>
</reference>
<reference key="2">
    <citation type="journal article" date="2003" name="Genome Res.">
        <title>The secreted protein discovery initiative (SPDI), a large-scale effort to identify novel human secreted and transmembrane proteins: a bioinformatics assessment.</title>
        <authorList>
            <person name="Clark H.F."/>
            <person name="Gurney A.L."/>
            <person name="Abaya E."/>
            <person name="Baker K."/>
            <person name="Baldwin D.T."/>
            <person name="Brush J."/>
            <person name="Chen J."/>
            <person name="Chow B."/>
            <person name="Chui C."/>
            <person name="Crowley C."/>
            <person name="Currell B."/>
            <person name="Deuel B."/>
            <person name="Dowd P."/>
            <person name="Eaton D."/>
            <person name="Foster J.S."/>
            <person name="Grimaldi C."/>
            <person name="Gu Q."/>
            <person name="Hass P.E."/>
            <person name="Heldens S."/>
            <person name="Huang A."/>
            <person name="Kim H.S."/>
            <person name="Klimowski L."/>
            <person name="Jin Y."/>
            <person name="Johnson S."/>
            <person name="Lee J."/>
            <person name="Lewis L."/>
            <person name="Liao D."/>
            <person name="Mark M.R."/>
            <person name="Robbie E."/>
            <person name="Sanchez C."/>
            <person name="Schoenfeld J."/>
            <person name="Seshagiri S."/>
            <person name="Simmons L."/>
            <person name="Singh J."/>
            <person name="Smith V."/>
            <person name="Stinson J."/>
            <person name="Vagts A."/>
            <person name="Vandlen R.L."/>
            <person name="Watanabe C."/>
            <person name="Wieand D."/>
            <person name="Woods K."/>
            <person name="Xie M.-H."/>
            <person name="Yansura D.G."/>
            <person name="Yi S."/>
            <person name="Yu G."/>
            <person name="Yuan J."/>
            <person name="Zhang M."/>
            <person name="Zhang Z."/>
            <person name="Goddard A.D."/>
            <person name="Wood W.I."/>
            <person name="Godowski P.J."/>
            <person name="Gray A.M."/>
        </authorList>
    </citation>
    <scope>NUCLEOTIDE SEQUENCE [LARGE SCALE MRNA] (ISOFORM 2)</scope>
</reference>
<reference key="3">
    <citation type="submission" date="2004-06" db="EMBL/GenBank/DDBJ databases">
        <title>Cloning of human full open reading frames in Gateway(TM) system entry vector (pDONR201).</title>
        <authorList>
            <person name="Ebert L."/>
            <person name="Schick M."/>
            <person name="Neubert P."/>
            <person name="Schatten R."/>
            <person name="Henze S."/>
            <person name="Korn B."/>
        </authorList>
    </citation>
    <scope>NUCLEOTIDE SEQUENCE [LARGE SCALE MRNA] (ISOFORM 1)</scope>
</reference>
<reference key="4">
    <citation type="journal article" date="2001" name="Nature">
        <title>The DNA sequence and comparative analysis of human chromosome 20.</title>
        <authorList>
            <person name="Deloukas P."/>
            <person name="Matthews L.H."/>
            <person name="Ashurst J.L."/>
            <person name="Burton J."/>
            <person name="Gilbert J.G.R."/>
            <person name="Jones M."/>
            <person name="Stavrides G."/>
            <person name="Almeida J.P."/>
            <person name="Babbage A.K."/>
            <person name="Bagguley C.L."/>
            <person name="Bailey J."/>
            <person name="Barlow K.F."/>
            <person name="Bates K.N."/>
            <person name="Beard L.M."/>
            <person name="Beare D.M."/>
            <person name="Beasley O.P."/>
            <person name="Bird C.P."/>
            <person name="Blakey S.E."/>
            <person name="Bridgeman A.M."/>
            <person name="Brown A.J."/>
            <person name="Buck D."/>
            <person name="Burrill W.D."/>
            <person name="Butler A.P."/>
            <person name="Carder C."/>
            <person name="Carter N.P."/>
            <person name="Chapman J.C."/>
            <person name="Clamp M."/>
            <person name="Clark G."/>
            <person name="Clark L.N."/>
            <person name="Clark S.Y."/>
            <person name="Clee C.M."/>
            <person name="Clegg S."/>
            <person name="Cobley V.E."/>
            <person name="Collier R.E."/>
            <person name="Connor R.E."/>
            <person name="Corby N.R."/>
            <person name="Coulson A."/>
            <person name="Coville G.J."/>
            <person name="Deadman R."/>
            <person name="Dhami P.D."/>
            <person name="Dunn M."/>
            <person name="Ellington A.G."/>
            <person name="Frankland J.A."/>
            <person name="Fraser A."/>
            <person name="French L."/>
            <person name="Garner P."/>
            <person name="Grafham D.V."/>
            <person name="Griffiths C."/>
            <person name="Griffiths M.N.D."/>
            <person name="Gwilliam R."/>
            <person name="Hall R.E."/>
            <person name="Hammond S."/>
            <person name="Harley J.L."/>
            <person name="Heath P.D."/>
            <person name="Ho S."/>
            <person name="Holden J.L."/>
            <person name="Howden P.J."/>
            <person name="Huckle E."/>
            <person name="Hunt A.R."/>
            <person name="Hunt S.E."/>
            <person name="Jekosch K."/>
            <person name="Johnson C.M."/>
            <person name="Johnson D."/>
            <person name="Kay M.P."/>
            <person name="Kimberley A.M."/>
            <person name="King A."/>
            <person name="Knights A."/>
            <person name="Laird G.K."/>
            <person name="Lawlor S."/>
            <person name="Lehvaeslaiho M.H."/>
            <person name="Leversha M.A."/>
            <person name="Lloyd C."/>
            <person name="Lloyd D.M."/>
            <person name="Lovell J.D."/>
            <person name="Marsh V.L."/>
            <person name="Martin S.L."/>
            <person name="McConnachie L.J."/>
            <person name="McLay K."/>
            <person name="McMurray A.A."/>
            <person name="Milne S.A."/>
            <person name="Mistry D."/>
            <person name="Moore M.J.F."/>
            <person name="Mullikin J.C."/>
            <person name="Nickerson T."/>
            <person name="Oliver K."/>
            <person name="Parker A."/>
            <person name="Patel R."/>
            <person name="Pearce T.A.V."/>
            <person name="Peck A.I."/>
            <person name="Phillimore B.J.C.T."/>
            <person name="Prathalingam S.R."/>
            <person name="Plumb R.W."/>
            <person name="Ramsay H."/>
            <person name="Rice C.M."/>
            <person name="Ross M.T."/>
            <person name="Scott C.E."/>
            <person name="Sehra H.K."/>
            <person name="Shownkeen R."/>
            <person name="Sims S."/>
            <person name="Skuce C.D."/>
            <person name="Smith M.L."/>
            <person name="Soderlund C."/>
            <person name="Steward C.A."/>
            <person name="Sulston J.E."/>
            <person name="Swann R.M."/>
            <person name="Sycamore N."/>
            <person name="Taylor R."/>
            <person name="Tee L."/>
            <person name="Thomas D.W."/>
            <person name="Thorpe A."/>
            <person name="Tracey A."/>
            <person name="Tromans A.C."/>
            <person name="Vaudin M."/>
            <person name="Wall M."/>
            <person name="Wallis J.M."/>
            <person name="Whitehead S.L."/>
            <person name="Whittaker P."/>
            <person name="Willey D.L."/>
            <person name="Williams L."/>
            <person name="Williams S.A."/>
            <person name="Wilming L."/>
            <person name="Wray P.W."/>
            <person name="Hubbard T."/>
            <person name="Durbin R.M."/>
            <person name="Bentley D.R."/>
            <person name="Beck S."/>
            <person name="Rogers J."/>
        </authorList>
    </citation>
    <scope>NUCLEOTIDE SEQUENCE [LARGE SCALE GENOMIC DNA]</scope>
</reference>
<reference key="5">
    <citation type="submission" date="2005-09" db="EMBL/GenBank/DDBJ databases">
        <authorList>
            <person name="Mural R.J."/>
            <person name="Istrail S."/>
            <person name="Sutton G.G."/>
            <person name="Florea L."/>
            <person name="Halpern A.L."/>
            <person name="Mobarry C.M."/>
            <person name="Lippert R."/>
            <person name="Walenz B."/>
            <person name="Shatkay H."/>
            <person name="Dew I."/>
            <person name="Miller J.R."/>
            <person name="Flanigan M.J."/>
            <person name="Edwards N.J."/>
            <person name="Bolanos R."/>
            <person name="Fasulo D."/>
            <person name="Halldorsson B.V."/>
            <person name="Hannenhalli S."/>
            <person name="Turner R."/>
            <person name="Yooseph S."/>
            <person name="Lu F."/>
            <person name="Nusskern D.R."/>
            <person name="Shue B.C."/>
            <person name="Zheng X.H."/>
            <person name="Zhong F."/>
            <person name="Delcher A.L."/>
            <person name="Huson D.H."/>
            <person name="Kravitz S.A."/>
            <person name="Mouchard L."/>
            <person name="Reinert K."/>
            <person name="Remington K.A."/>
            <person name="Clark A.G."/>
            <person name="Waterman M.S."/>
            <person name="Eichler E.E."/>
            <person name="Adams M.D."/>
            <person name="Hunkapiller M.W."/>
            <person name="Myers E.W."/>
            <person name="Venter J.C."/>
        </authorList>
    </citation>
    <scope>NUCLEOTIDE SEQUENCE [LARGE SCALE GENOMIC DNA]</scope>
</reference>
<reference key="6">
    <citation type="journal article" date="2004" name="Genome Res.">
        <title>The status, quality, and expansion of the NIH full-length cDNA project: the Mammalian Gene Collection (MGC).</title>
        <authorList>
            <consortium name="The MGC Project Team"/>
        </authorList>
    </citation>
    <scope>NUCLEOTIDE SEQUENCE [LARGE SCALE MRNA] (ISOFORM 1)</scope>
    <scope>VARIANT THR-456</scope>
    <source>
        <tissue>Colon</tissue>
        <tissue>Skin</tissue>
    </source>
</reference>
<reference key="7">
    <citation type="journal article" date="2005" name="Glycobiology">
        <title>Human EDEM2, a novel homolog of family 47 glycosidases, is involved in ER-associated degradation of glycoproteins.</title>
        <authorList>
            <person name="Mast S.W."/>
            <person name="Diekman K."/>
            <person name="Karaveg K."/>
            <person name="Davis A."/>
            <person name="Sifers R.N."/>
            <person name="Moremen K.W."/>
        </authorList>
    </citation>
    <scope>FUNCTION</scope>
    <scope>SUBCELLULAR LOCATION</scope>
    <scope>TISSUE SPECIFICITY</scope>
    <scope>GLYCOSYLATION</scope>
</reference>
<reference key="8">
    <citation type="journal article" date="2014" name="J. Cell Biol.">
        <title>EDEM2 initiates mammalian glycoprotein ERAD by catalyzing the first mannose trimming step.</title>
        <authorList>
            <person name="Ninagawa S."/>
            <person name="Okada T."/>
            <person name="Sumitomo Y."/>
            <person name="Kamiya Y."/>
            <person name="Kato K."/>
            <person name="Horimoto S."/>
            <person name="Ishikawa T."/>
            <person name="Takeda S."/>
            <person name="Sakuma T."/>
            <person name="Yamamoto T."/>
            <person name="Mori K."/>
        </authorList>
    </citation>
    <scope>FUNCTION</scope>
    <scope>MUTAGENESIS OF GLU-117</scope>
</reference>
<keyword id="KW-0025">Alternative splicing</keyword>
<keyword id="KW-0256">Endoplasmic reticulum</keyword>
<keyword id="KW-0325">Glycoprotein</keyword>
<keyword id="KW-1267">Proteomics identification</keyword>
<keyword id="KW-1185">Reference proteome</keyword>
<keyword id="KW-0732">Signal</keyword>
<keyword id="KW-0834">Unfolded protein response</keyword>
<feature type="signal peptide" evidence="2">
    <location>
        <begin position="1"/>
        <end position="21"/>
    </location>
</feature>
<feature type="chain" id="PRO_0000012086" description="ER degradation-enhancing alpha-mannosidase-like protein 2">
    <location>
        <begin position="22"/>
        <end position="578"/>
    </location>
</feature>
<feature type="region of interest" description="Disordered" evidence="3">
    <location>
        <begin position="517"/>
        <end position="557"/>
    </location>
</feature>
<feature type="compositionally biased region" description="Basic and acidic residues" evidence="3">
    <location>
        <begin position="538"/>
        <end position="548"/>
    </location>
</feature>
<feature type="glycosylation site" description="N-linked (GlcNAc...) asparagine" evidence="2">
    <location>
        <position position="90"/>
    </location>
</feature>
<feature type="glycosylation site" description="N-linked (GlcNAc...) asparagine" evidence="2">
    <location>
        <position position="112"/>
    </location>
</feature>
<feature type="glycosylation site" description="N-linked (GlcNAc...) asparagine" evidence="2">
    <location>
        <position position="289"/>
    </location>
</feature>
<feature type="glycosylation site" description="N-linked (GlcNAc...) asparagine" evidence="2">
    <location>
        <position position="450"/>
    </location>
</feature>
<feature type="splice variant" id="VSP_013183" description="In isoform 2." evidence="7 8">
    <location>
        <begin position="36"/>
        <end position="72"/>
    </location>
</feature>
<feature type="sequence variant" id="VAR_012165" description="In dbSNP:rs3746429." evidence="4">
    <original>A</original>
    <variation>T</variation>
    <location>
        <position position="456"/>
    </location>
</feature>
<feature type="sequence variant" id="VAR_055842" description="In dbSNP:rs6060248.">
    <original>R</original>
    <variation>Q</variation>
    <location>
        <position position="510"/>
    </location>
</feature>
<feature type="sequence variant" id="VAR_055843" description="In dbSNP:rs1052056.">
    <original>L</original>
    <variation>F</variation>
    <location>
        <position position="556"/>
    </location>
</feature>
<feature type="mutagenesis site" description="Loss of ERAD activity." evidence="6">
    <original>E</original>
    <variation>Q</variation>
    <location>
        <position position="117"/>
    </location>
</feature>
<feature type="sequence conflict" description="In Ref. 2; AAQ88943." evidence="9" ref="2">
    <original>P</original>
    <variation>L</variation>
    <location>
        <position position="482"/>
    </location>
</feature>
<feature type="sequence conflict" description="In Ref. 1; BAA91806." evidence="9" ref="1">
    <original>S</original>
    <variation>C</variation>
    <location>
        <position position="511"/>
    </location>
</feature>
<proteinExistence type="evidence at protein level"/>
<protein>
    <recommendedName>
        <fullName>ER degradation-enhancing alpha-mannosidase-like protein 2</fullName>
    </recommendedName>
</protein>
<organism>
    <name type="scientific">Homo sapiens</name>
    <name type="common">Human</name>
    <dbReference type="NCBI Taxonomy" id="9606"/>
    <lineage>
        <taxon>Eukaryota</taxon>
        <taxon>Metazoa</taxon>
        <taxon>Chordata</taxon>
        <taxon>Craniata</taxon>
        <taxon>Vertebrata</taxon>
        <taxon>Euteleostomi</taxon>
        <taxon>Mammalia</taxon>
        <taxon>Eutheria</taxon>
        <taxon>Euarchontoglires</taxon>
        <taxon>Primates</taxon>
        <taxon>Haplorrhini</taxon>
        <taxon>Catarrhini</taxon>
        <taxon>Hominidae</taxon>
        <taxon>Homo</taxon>
    </lineage>
</organism>